<reference evidence="6" key="1">
    <citation type="journal article" date="1998" name="Science">
        <title>Genome sequence of the nematode C. elegans: a platform for investigating biology.</title>
        <authorList>
            <consortium name="The C. elegans sequencing consortium"/>
        </authorList>
    </citation>
    <scope>NUCLEOTIDE SEQUENCE [LARGE SCALE GENOMIC DNA]</scope>
    <source>
        <strain evidence="6">Bristol N2</strain>
    </source>
</reference>
<reference evidence="5" key="2">
    <citation type="journal article" date="2015" name="Mol. Biol. Cell">
        <title>Twitchin kinase interacts with MAPKAP kinase 2 in Caenorhabditis elegans striated muscle.</title>
        <authorList>
            <person name="Matsunaga Y."/>
            <person name="Qadota H."/>
            <person name="Furukawa M."/>
            <person name="Choe H.H."/>
            <person name="Benian G.M."/>
        </authorList>
    </citation>
    <scope>FUNCTION</scope>
    <scope>CATALYTIC ACTIVITY</scope>
    <scope>COFACTOR</scope>
    <scope>INTERACTION WITH UNC-22</scope>
    <scope>SUBCELLULAR LOCATION</scope>
    <scope>TISSUE SPECIFICITY</scope>
    <scope>PHOSPHORYLATION</scope>
    <scope>DISRUPTION PHENOTYPE</scope>
</reference>
<dbReference type="EC" id="2.7.11.1" evidence="3"/>
<dbReference type="EMBL" id="BX284602">
    <property type="protein sequence ID" value="CAA91283.1"/>
    <property type="molecule type" value="Genomic_DNA"/>
</dbReference>
<dbReference type="EMBL" id="BX284602">
    <property type="protein sequence ID" value="CAD59153.1"/>
    <property type="molecule type" value="Genomic_DNA"/>
</dbReference>
<dbReference type="EMBL" id="BX284602">
    <property type="protein sequence ID" value="CAE48503.1"/>
    <property type="molecule type" value="Genomic_DNA"/>
</dbReference>
<dbReference type="EMBL" id="BX284602">
    <property type="protein sequence ID" value="CAH19101.1"/>
    <property type="molecule type" value="Genomic_DNA"/>
</dbReference>
<dbReference type="EMBL" id="BX284602">
    <property type="protein sequence ID" value="CAH19102.1"/>
    <property type="molecule type" value="Genomic_DNA"/>
</dbReference>
<dbReference type="PIR" id="T23489">
    <property type="entry name" value="T23489"/>
</dbReference>
<dbReference type="RefSeq" id="NP_001022238.1">
    <molecule id="Q21360-3"/>
    <property type="nucleotide sequence ID" value="NM_001027067.5"/>
</dbReference>
<dbReference type="RefSeq" id="NP_001022239.1">
    <property type="nucleotide sequence ID" value="NM_001027068.3"/>
</dbReference>
<dbReference type="RefSeq" id="NP_001022240.1">
    <property type="nucleotide sequence ID" value="NM_001027069.3"/>
</dbReference>
<dbReference type="RefSeq" id="NP_001359655.1">
    <molecule id="Q21360-2"/>
    <property type="nucleotide sequence ID" value="NM_001373775.3"/>
</dbReference>
<dbReference type="RefSeq" id="NP_001367107.1">
    <molecule id="Q21360-5"/>
    <property type="nucleotide sequence ID" value="NM_001381538.1"/>
</dbReference>
<dbReference type="RefSeq" id="NP_495860.1">
    <molecule id="Q21360-1"/>
    <property type="nucleotide sequence ID" value="NM_063459.5"/>
</dbReference>
<dbReference type="RefSeq" id="NP_871925.1">
    <property type="nucleotide sequence ID" value="NM_182125.5"/>
</dbReference>
<dbReference type="SMR" id="Q21360"/>
<dbReference type="FunCoup" id="Q21360">
    <property type="interactions" value="14"/>
</dbReference>
<dbReference type="IntAct" id="Q21360">
    <property type="interactions" value="1"/>
</dbReference>
<dbReference type="MINT" id="Q21360"/>
<dbReference type="STRING" id="6239.K08F8.1a.2"/>
<dbReference type="PaxDb" id="6239-K08F8.1a.2"/>
<dbReference type="PeptideAtlas" id="Q21360"/>
<dbReference type="EnsemblMetazoa" id="K08F8.1a.1">
    <molecule id="Q21360-1"/>
    <property type="protein sequence ID" value="K08F8.1a.1"/>
    <property type="gene ID" value="WBGene00010681"/>
</dbReference>
<dbReference type="EnsemblMetazoa" id="K08F8.1b.1">
    <molecule id="Q21360-2"/>
    <property type="protein sequence ID" value="K08F8.1b.1"/>
    <property type="gene ID" value="WBGene00010681"/>
</dbReference>
<dbReference type="EnsemblMetazoa" id="K08F8.1c.1">
    <molecule id="Q21360-3"/>
    <property type="protein sequence ID" value="K08F8.1c.1"/>
    <property type="gene ID" value="WBGene00010681"/>
</dbReference>
<dbReference type="EnsemblMetazoa" id="K08F8.1d.1">
    <property type="protein sequence ID" value="K08F8.1d.1"/>
    <property type="gene ID" value="WBGene00010681"/>
</dbReference>
<dbReference type="EnsemblMetazoa" id="K08F8.1e.1">
    <molecule id="Q21360-5"/>
    <property type="protein sequence ID" value="K08F8.1e.1"/>
    <property type="gene ID" value="WBGene00010681"/>
</dbReference>
<dbReference type="GeneID" id="174398"/>
<dbReference type="KEGG" id="cel:CELE_K08F8.1"/>
<dbReference type="UCSC" id="K08F8.1b.2">
    <property type="organism name" value="c. elegans"/>
</dbReference>
<dbReference type="AGR" id="WB:WBGene00010681"/>
<dbReference type="CTD" id="174398"/>
<dbReference type="WormBase" id="K08F8.1a">
    <molecule id="Q21360-1"/>
    <property type="protein sequence ID" value="CE03467"/>
    <property type="gene ID" value="WBGene00010681"/>
    <property type="gene designation" value="mak-1"/>
</dbReference>
<dbReference type="WormBase" id="K08F8.1b">
    <molecule id="Q21360-2"/>
    <property type="protein sequence ID" value="CE32906"/>
    <property type="gene ID" value="WBGene00010681"/>
    <property type="gene designation" value="mak-1"/>
</dbReference>
<dbReference type="WormBase" id="K08F8.1c">
    <molecule id="Q21360-3"/>
    <property type="protein sequence ID" value="CE35895"/>
    <property type="gene ID" value="WBGene00010681"/>
    <property type="gene designation" value="mak-1"/>
</dbReference>
<dbReference type="WormBase" id="K08F8.1d">
    <molecule id="Q21360-4"/>
    <property type="protein sequence ID" value="CE52142"/>
    <property type="gene ID" value="WBGene00010681"/>
    <property type="gene designation" value="mak-1"/>
</dbReference>
<dbReference type="WormBase" id="K08F8.1e">
    <molecule id="Q21360-5"/>
    <property type="protein sequence ID" value="CE37258"/>
    <property type="gene ID" value="WBGene00010681"/>
    <property type="gene designation" value="mak-1"/>
</dbReference>
<dbReference type="eggNOG" id="KOG0604">
    <property type="taxonomic scope" value="Eukaryota"/>
</dbReference>
<dbReference type="InParanoid" id="Q21360"/>
<dbReference type="OMA" id="NVKCLLM"/>
<dbReference type="OrthoDB" id="40902at2759"/>
<dbReference type="PhylomeDB" id="Q21360"/>
<dbReference type="Reactome" id="R-CEL-171007">
    <property type="pathway name" value="p38MAPK events"/>
</dbReference>
<dbReference type="Reactome" id="R-CEL-199920">
    <property type="pathway name" value="CREB phosphorylation"/>
</dbReference>
<dbReference type="Reactome" id="R-CEL-2559580">
    <property type="pathway name" value="Oxidative Stress Induced Senescence"/>
</dbReference>
<dbReference type="Reactome" id="R-CEL-3371453">
    <property type="pathway name" value="Regulation of HSF1-mediated heat shock response"/>
</dbReference>
<dbReference type="Reactome" id="R-CEL-4420097">
    <property type="pathway name" value="VEGFA-VEGFR2 Pathway"/>
</dbReference>
<dbReference type="Reactome" id="R-CEL-450302">
    <property type="pathway name" value="activated TAK1 mediates p38 MAPK activation"/>
</dbReference>
<dbReference type="Reactome" id="R-CEL-450385">
    <property type="pathway name" value="Butyrate Response Factor 1 (BRF1) binds and destabilizes mRNA"/>
</dbReference>
<dbReference type="Reactome" id="R-CEL-450513">
    <property type="pathway name" value="Tristetraprolin (TTP, ZFP36) binds and destabilizes mRNA"/>
</dbReference>
<dbReference type="PRO" id="PR:Q21360"/>
<dbReference type="Proteomes" id="UP000001940">
    <property type="component" value="Chromosome II"/>
</dbReference>
<dbReference type="Bgee" id="WBGene00010681">
    <property type="expression patterns" value="Expressed in larva and 4 other cell types or tissues"/>
</dbReference>
<dbReference type="GO" id="GO:0031672">
    <property type="term" value="C:A band"/>
    <property type="evidence" value="ECO:0000314"/>
    <property type="project" value="WormBase"/>
</dbReference>
<dbReference type="GO" id="GO:0005737">
    <property type="term" value="C:cytoplasm"/>
    <property type="evidence" value="ECO:0000314"/>
    <property type="project" value="WormBase"/>
</dbReference>
<dbReference type="GO" id="GO:0005634">
    <property type="term" value="C:nucleus"/>
    <property type="evidence" value="ECO:0000318"/>
    <property type="project" value="GO_Central"/>
</dbReference>
<dbReference type="GO" id="GO:0005524">
    <property type="term" value="F:ATP binding"/>
    <property type="evidence" value="ECO:0007669"/>
    <property type="project" value="UniProtKB-KW"/>
</dbReference>
<dbReference type="GO" id="GO:0009931">
    <property type="term" value="F:calcium-dependent protein serine/threonine kinase activity"/>
    <property type="evidence" value="ECO:0000318"/>
    <property type="project" value="GO_Central"/>
</dbReference>
<dbReference type="GO" id="GO:0004683">
    <property type="term" value="F:calcium/calmodulin-dependent protein kinase activity"/>
    <property type="evidence" value="ECO:0000318"/>
    <property type="project" value="GO_Central"/>
</dbReference>
<dbReference type="GO" id="GO:0005516">
    <property type="term" value="F:calmodulin binding"/>
    <property type="evidence" value="ECO:0000318"/>
    <property type="project" value="GO_Central"/>
</dbReference>
<dbReference type="GO" id="GO:0046872">
    <property type="term" value="F:metal ion binding"/>
    <property type="evidence" value="ECO:0007669"/>
    <property type="project" value="UniProtKB-KW"/>
</dbReference>
<dbReference type="GO" id="GO:0051019">
    <property type="term" value="F:mitogen-activated protein kinase binding"/>
    <property type="evidence" value="ECO:0000318"/>
    <property type="project" value="GO_Central"/>
</dbReference>
<dbReference type="GO" id="GO:0004672">
    <property type="term" value="F:protein kinase activity"/>
    <property type="evidence" value="ECO:0000314"/>
    <property type="project" value="WormBase"/>
</dbReference>
<dbReference type="GO" id="GO:0019901">
    <property type="term" value="F:protein kinase binding"/>
    <property type="evidence" value="ECO:0000353"/>
    <property type="project" value="UniProtKB"/>
</dbReference>
<dbReference type="GO" id="GO:0106310">
    <property type="term" value="F:protein serine kinase activity"/>
    <property type="evidence" value="ECO:0007669"/>
    <property type="project" value="RHEA"/>
</dbReference>
<dbReference type="GO" id="GO:0008344">
    <property type="term" value="P:adult locomotory behavior"/>
    <property type="evidence" value="ECO:0000315"/>
    <property type="project" value="UniProtKB"/>
</dbReference>
<dbReference type="GO" id="GO:0035095">
    <property type="term" value="P:behavioral response to nicotine"/>
    <property type="evidence" value="ECO:0000315"/>
    <property type="project" value="UniProtKB"/>
</dbReference>
<dbReference type="GO" id="GO:0035556">
    <property type="term" value="P:intracellular signal transduction"/>
    <property type="evidence" value="ECO:0000318"/>
    <property type="project" value="GO_Central"/>
</dbReference>
<dbReference type="GO" id="GO:0046777">
    <property type="term" value="P:protein autophosphorylation"/>
    <property type="evidence" value="ECO:0000315"/>
    <property type="project" value="UniProtKB"/>
</dbReference>
<dbReference type="GO" id="GO:0006468">
    <property type="term" value="P:protein phosphorylation"/>
    <property type="evidence" value="ECO:0000315"/>
    <property type="project" value="UniProtKB"/>
</dbReference>
<dbReference type="CDD" id="cd14089">
    <property type="entry name" value="STKc_MAPKAPK"/>
    <property type="match status" value="1"/>
</dbReference>
<dbReference type="FunFam" id="3.30.200.20:FF:000156">
    <property type="entry name" value="MAP kinase-activated protein kinase 3"/>
    <property type="match status" value="1"/>
</dbReference>
<dbReference type="FunFam" id="1.10.510.10:FF:001523">
    <property type="entry name" value="MAP kinase-activated protein kinase mak-1"/>
    <property type="match status" value="1"/>
</dbReference>
<dbReference type="Gene3D" id="4.10.1170.10">
    <property type="entry name" value="MAP kinase activated protein kinase 2"/>
    <property type="match status" value="1"/>
</dbReference>
<dbReference type="Gene3D" id="3.30.200.20">
    <property type="entry name" value="Phosphorylase Kinase, domain 1"/>
    <property type="match status" value="1"/>
</dbReference>
<dbReference type="Gene3D" id="1.10.510.10">
    <property type="entry name" value="Transferase(Phosphotransferase) domain 1"/>
    <property type="match status" value="1"/>
</dbReference>
<dbReference type="InterPro" id="IPR011009">
    <property type="entry name" value="Kinase-like_dom_sf"/>
</dbReference>
<dbReference type="InterPro" id="IPR027442">
    <property type="entry name" value="MAPKAPK_C"/>
</dbReference>
<dbReference type="InterPro" id="IPR000719">
    <property type="entry name" value="Prot_kinase_dom"/>
</dbReference>
<dbReference type="InterPro" id="IPR017441">
    <property type="entry name" value="Protein_kinase_ATP_BS"/>
</dbReference>
<dbReference type="InterPro" id="IPR008271">
    <property type="entry name" value="Ser/Thr_kinase_AS"/>
</dbReference>
<dbReference type="PANTHER" id="PTHR24347">
    <property type="entry name" value="SERINE/THREONINE-PROTEIN KINASE"/>
    <property type="match status" value="1"/>
</dbReference>
<dbReference type="Pfam" id="PF00069">
    <property type="entry name" value="Pkinase"/>
    <property type="match status" value="1"/>
</dbReference>
<dbReference type="SMART" id="SM00220">
    <property type="entry name" value="S_TKc"/>
    <property type="match status" value="1"/>
</dbReference>
<dbReference type="SUPFAM" id="SSF56112">
    <property type="entry name" value="Protein kinase-like (PK-like)"/>
    <property type="match status" value="1"/>
</dbReference>
<dbReference type="PROSITE" id="PS00107">
    <property type="entry name" value="PROTEIN_KINASE_ATP"/>
    <property type="match status" value="1"/>
</dbReference>
<dbReference type="PROSITE" id="PS50011">
    <property type="entry name" value="PROTEIN_KINASE_DOM"/>
    <property type="match status" value="1"/>
</dbReference>
<dbReference type="PROSITE" id="PS00108">
    <property type="entry name" value="PROTEIN_KINASE_ST"/>
    <property type="match status" value="1"/>
</dbReference>
<sequence>MMFEYEEDEDPMEQQKHEEFKHHSTDHSGSPQENPFRFSYDTGKRAASMFVTPSSEDLIAYGTKHLLDSPTAVQRSLVLNATTSLNIDCDLSSDDDLSPTTQRKICFCASQNPAETQEQGLRPAKSTLAISFPCHQHQITEDYTISAEIIGIGESGKVMACYQKVTGEKFALKVLRDSQKARREVELHWLTNAHENVVSILDIYENTFDNVKCLLMVVEFLEGGDLLSQFESQGSIPYTEKKVGEIIRQIGNAVMYLHDMNIAHRDIKLENILCSGTGDNCVYKLGDYGFAKRPERNVLMESPCCTPFYAPPEVLGRERYDKSCDMWSLGVAMYILLCGYPPFYSMKGVALSPGMRSRIANAYYAFPHEEWDCVSKDTKDDIRCLLRTNPSDRLTIHELMATPLVTGEPIVPGKHITTAIAIPGADESECGGGVFDDGFIVEEEETPDTVAEILPVPKSVRFLRDGVKAPRLHSIQEEVGRAMEIMRMGTDQVYIKNPTASCNNLFERRRAVHLSIPRVYC</sequence>
<gene>
    <name evidence="4 7" type="primary">mak-1</name>
    <name evidence="7" type="ORF">K08F8.1</name>
</gene>
<feature type="chain" id="PRO_0000438707" description="MAP kinase-activated protein kinase mak-1" evidence="5">
    <location>
        <begin position="1"/>
        <end position="521"/>
    </location>
</feature>
<feature type="domain" description="Protein kinase" evidence="1">
    <location>
        <begin position="144"/>
        <end position="405"/>
    </location>
</feature>
<feature type="region of interest" description="Disordered" evidence="2">
    <location>
        <begin position="1"/>
        <end position="36"/>
    </location>
</feature>
<feature type="compositionally biased region" description="Acidic residues" evidence="2">
    <location>
        <begin position="1"/>
        <end position="12"/>
    </location>
</feature>
<feature type="compositionally biased region" description="Basic and acidic residues" evidence="2">
    <location>
        <begin position="13"/>
        <end position="26"/>
    </location>
</feature>
<feature type="active site" description="Proton acceptor" evidence="1">
    <location>
        <position position="266"/>
    </location>
</feature>
<feature type="binding site" evidence="1">
    <location>
        <begin position="150"/>
        <end position="158"/>
    </location>
    <ligand>
        <name>ATP</name>
        <dbReference type="ChEBI" id="CHEBI:30616"/>
    </ligand>
</feature>
<feature type="binding site" evidence="1">
    <location>
        <position position="173"/>
    </location>
    <ligand>
        <name>ATP</name>
        <dbReference type="ChEBI" id="CHEBI:30616"/>
    </ligand>
</feature>
<feature type="splice variant" id="VSP_058725" description="In isoform c and isoform e." evidence="5">
    <location>
        <begin position="1"/>
        <end position="158"/>
    </location>
</feature>
<feature type="splice variant" id="VSP_058726" description="In isoform d." evidence="5">
    <original>MMFEYEEDEDPMEQQKHEEFKHHSTDHSGSPQENPFRFSYDTGKRAASMFVTPSSEDLIAYGTKHLLDSPTAVQ</original>
    <variation>MKKMKIPWNNKNMKNSNIIQRITL</variation>
    <location>
        <begin position="1"/>
        <end position="74"/>
    </location>
</feature>
<feature type="splice variant" id="VSP_058727" description="In isoform b." evidence="5">
    <original>L</original>
    <variation>F</variation>
    <location>
        <position position="336"/>
    </location>
</feature>
<feature type="splice variant" id="VSP_058730" description="In isoform b." evidence="5">
    <location>
        <begin position="337"/>
        <end position="521"/>
    </location>
</feature>
<feature type="splice variant" id="VSP_058728" description="In isoform d and isoform e." evidence="5">
    <original>TKDDIRCLLRTNPSDRLTI</original>
    <variation>SKRLETTEFHDFSTLRIWS</variation>
    <location>
        <begin position="378"/>
        <end position="396"/>
    </location>
</feature>
<feature type="splice variant" id="VSP_058729" description="In isoform d and isoform e." evidence="5">
    <location>
        <begin position="397"/>
        <end position="521"/>
    </location>
</feature>
<organism evidence="6">
    <name type="scientific">Caenorhabditis elegans</name>
    <dbReference type="NCBI Taxonomy" id="6239"/>
    <lineage>
        <taxon>Eukaryota</taxon>
        <taxon>Metazoa</taxon>
        <taxon>Ecdysozoa</taxon>
        <taxon>Nematoda</taxon>
        <taxon>Chromadorea</taxon>
        <taxon>Rhabditida</taxon>
        <taxon>Rhabditina</taxon>
        <taxon>Rhabditomorpha</taxon>
        <taxon>Rhabditoidea</taxon>
        <taxon>Rhabditidae</taxon>
        <taxon>Peloderinae</taxon>
        <taxon>Caenorhabditis</taxon>
    </lineage>
</organism>
<keyword id="KW-0025">Alternative splicing</keyword>
<keyword id="KW-0067">ATP-binding</keyword>
<keyword id="KW-0963">Cytoplasm</keyword>
<keyword id="KW-0418">Kinase</keyword>
<keyword id="KW-0460">Magnesium</keyword>
<keyword id="KW-0479">Metal-binding</keyword>
<keyword id="KW-0547">Nucleotide-binding</keyword>
<keyword id="KW-0597">Phosphoprotein</keyword>
<keyword id="KW-1185">Reference proteome</keyword>
<keyword id="KW-0723">Serine/threonine-protein kinase</keyword>
<keyword id="KW-0808">Transferase</keyword>
<accession>Q21360</accession>
<accession>Q65ZB6</accession>
<accession>Q65ZB7</accession>
<accession>Q7JM88</accession>
<accession>Q8I117</accession>
<comment type="function">
    <text evidence="3">Serine/threonine-protein kinase which may play a role in body wall muscle contraction. May phosphorylate unc-22/twitchin.</text>
</comment>
<comment type="catalytic activity">
    <reaction evidence="3">
        <text>L-seryl-[protein] + ATP = O-phospho-L-seryl-[protein] + ADP + H(+)</text>
        <dbReference type="Rhea" id="RHEA:17989"/>
        <dbReference type="Rhea" id="RHEA-COMP:9863"/>
        <dbReference type="Rhea" id="RHEA-COMP:11604"/>
        <dbReference type="ChEBI" id="CHEBI:15378"/>
        <dbReference type="ChEBI" id="CHEBI:29999"/>
        <dbReference type="ChEBI" id="CHEBI:30616"/>
        <dbReference type="ChEBI" id="CHEBI:83421"/>
        <dbReference type="ChEBI" id="CHEBI:456216"/>
        <dbReference type="EC" id="2.7.11.1"/>
    </reaction>
</comment>
<comment type="catalytic activity">
    <reaction evidence="3">
        <text>L-threonyl-[protein] + ATP = O-phospho-L-threonyl-[protein] + ADP + H(+)</text>
        <dbReference type="Rhea" id="RHEA:46608"/>
        <dbReference type="Rhea" id="RHEA-COMP:11060"/>
        <dbReference type="Rhea" id="RHEA-COMP:11605"/>
        <dbReference type="ChEBI" id="CHEBI:15378"/>
        <dbReference type="ChEBI" id="CHEBI:30013"/>
        <dbReference type="ChEBI" id="CHEBI:30616"/>
        <dbReference type="ChEBI" id="CHEBI:61977"/>
        <dbReference type="ChEBI" id="CHEBI:456216"/>
        <dbReference type="EC" id="2.7.11.1"/>
    </reaction>
</comment>
<comment type="cofactor">
    <cofactor evidence="3">
        <name>Mg(2+)</name>
        <dbReference type="ChEBI" id="CHEBI:18420"/>
    </cofactor>
</comment>
<comment type="subunit">
    <text evidence="3">May interact (via protein kinase domain) with unc-22 (via protein kinase and CRD domains).</text>
</comment>
<comment type="subcellular location">
    <subcellularLocation>
        <location evidence="3">Cytoplasm</location>
        <location evidence="3">Myofibril</location>
        <location evidence="3">Sarcomere</location>
    </subcellularLocation>
    <subcellularLocation>
        <location evidence="3">Cytoplasm</location>
        <location evidence="3">Myofibril</location>
        <location evidence="3">Sarcomere</location>
        <location evidence="3">A band</location>
    </subcellularLocation>
    <text evidence="3">Localizes between and around dense bodies. Colocalizes with myosin heavy chain unc-54 at the outer edge of A-bands.</text>
</comment>
<comment type="alternative products">
    <event type="alternative splicing"/>
    <isoform>
        <id>Q21360-1</id>
        <name evidence="7">a</name>
        <sequence type="displayed"/>
    </isoform>
    <isoform>
        <id>Q21360-2</id>
        <name evidence="8">b</name>
        <sequence type="described" ref="VSP_058727 VSP_058730"/>
    </isoform>
    <isoform>
        <id>Q21360-3</id>
        <name evidence="9">c</name>
        <sequence type="described" ref="VSP_058725"/>
    </isoform>
    <isoform>
        <id>Q21360-4</id>
        <name evidence="10">d</name>
        <sequence type="described" ref="VSP_058726 VSP_058728 VSP_058729"/>
    </isoform>
    <isoform>
        <id>Q21360-5</id>
        <name evidence="11">e</name>
        <sequence type="described" ref="VSP_058725 VSP_058728 VSP_058729"/>
    </isoform>
</comment>
<comment type="tissue specificity">
    <text evidence="3">Expressed in body wall muscles (at protein level). Expressed in intestine.</text>
</comment>
<comment type="PTM">
    <text evidence="3">Autophosphorylated in vitro.</text>
</comment>
<comment type="disruption phenotype">
    <text evidence="3">Slight reduction in motility. Partially resistant to nicotine-induced paralysis; resistance is further increased in a mak-2 gk1110 mutant background. Normal localization of several components of the sarcomere including unc-52, unc-112, unc-95, atn-1,unc-89 and myo-3.</text>
</comment>
<comment type="similarity">
    <text evidence="5">Belongs to the protein kinase superfamily. CAMK Ser/Thr protein kinase family.</text>
</comment>
<proteinExistence type="evidence at protein level"/>
<name>MAK1_CAEEL</name>
<protein>
    <recommendedName>
        <fullName evidence="4">MAP kinase-activated protein kinase mak-1</fullName>
        <shortName evidence="5">MAPK-activated protein kinase mak-1</shortName>
        <ecNumber evidence="3">2.7.11.1</ecNumber>
    </recommendedName>
</protein>
<evidence type="ECO:0000255" key="1">
    <source>
        <dbReference type="PROSITE-ProRule" id="PRU00159"/>
    </source>
</evidence>
<evidence type="ECO:0000256" key="2">
    <source>
        <dbReference type="SAM" id="MobiDB-lite"/>
    </source>
</evidence>
<evidence type="ECO:0000269" key="3">
    <source>
    </source>
</evidence>
<evidence type="ECO:0000303" key="4">
    <source>
    </source>
</evidence>
<evidence type="ECO:0000305" key="5"/>
<evidence type="ECO:0000312" key="6">
    <source>
        <dbReference type="Proteomes" id="UP000001940"/>
    </source>
</evidence>
<evidence type="ECO:0000312" key="7">
    <source>
        <dbReference type="WormBase" id="K08F8.1a"/>
    </source>
</evidence>
<evidence type="ECO:0000312" key="8">
    <source>
        <dbReference type="WormBase" id="K08F8.1b"/>
    </source>
</evidence>
<evidence type="ECO:0000312" key="9">
    <source>
        <dbReference type="WormBase" id="K08F8.1c"/>
    </source>
</evidence>
<evidence type="ECO:0000312" key="10">
    <source>
        <dbReference type="WormBase" id="K08F8.1d"/>
    </source>
</evidence>
<evidence type="ECO:0000312" key="11">
    <source>
        <dbReference type="WormBase" id="K08F8.1e"/>
    </source>
</evidence>